<organism>
    <name type="scientific">Aster yellows witches'-broom phytoplasma (strain AYWB)</name>
    <dbReference type="NCBI Taxonomy" id="322098"/>
    <lineage>
        <taxon>Bacteria</taxon>
        <taxon>Bacillati</taxon>
        <taxon>Mycoplasmatota</taxon>
        <taxon>Mollicutes</taxon>
        <taxon>Acholeplasmatales</taxon>
        <taxon>Acholeplasmataceae</taxon>
        <taxon>Candidatus Phytoplasma</taxon>
        <taxon>16SrI (Aster yellows group)</taxon>
    </lineage>
</organism>
<name>RL27_AYWBP</name>
<dbReference type="EMBL" id="CP000061">
    <property type="protein sequence ID" value="ABC65744.1"/>
    <property type="molecule type" value="Genomic_DNA"/>
</dbReference>
<dbReference type="RefSeq" id="WP_011160463.1">
    <property type="nucleotide sequence ID" value="NC_007716.1"/>
</dbReference>
<dbReference type="SMR" id="Q2NIJ9"/>
<dbReference type="STRING" id="322098.AYWB_627"/>
<dbReference type="KEGG" id="ayw:AYWB_627"/>
<dbReference type="eggNOG" id="COG0211">
    <property type="taxonomic scope" value="Bacteria"/>
</dbReference>
<dbReference type="HOGENOM" id="CLU_095424_4_0_14"/>
<dbReference type="OrthoDB" id="9803474at2"/>
<dbReference type="PhylomeDB" id="Q2NIJ9"/>
<dbReference type="Proteomes" id="UP000001934">
    <property type="component" value="Chromosome"/>
</dbReference>
<dbReference type="GO" id="GO:0022625">
    <property type="term" value="C:cytosolic large ribosomal subunit"/>
    <property type="evidence" value="ECO:0007669"/>
    <property type="project" value="TreeGrafter"/>
</dbReference>
<dbReference type="GO" id="GO:0003735">
    <property type="term" value="F:structural constituent of ribosome"/>
    <property type="evidence" value="ECO:0007669"/>
    <property type="project" value="InterPro"/>
</dbReference>
<dbReference type="GO" id="GO:0006412">
    <property type="term" value="P:translation"/>
    <property type="evidence" value="ECO:0007669"/>
    <property type="project" value="UniProtKB-UniRule"/>
</dbReference>
<dbReference type="FunFam" id="2.40.50.100:FF:000004">
    <property type="entry name" value="50S ribosomal protein L27"/>
    <property type="match status" value="1"/>
</dbReference>
<dbReference type="Gene3D" id="2.40.50.100">
    <property type="match status" value="1"/>
</dbReference>
<dbReference type="HAMAP" id="MF_00539">
    <property type="entry name" value="Ribosomal_bL27"/>
    <property type="match status" value="1"/>
</dbReference>
<dbReference type="InterPro" id="IPR001684">
    <property type="entry name" value="Ribosomal_bL27"/>
</dbReference>
<dbReference type="InterPro" id="IPR018261">
    <property type="entry name" value="Ribosomal_bL27_CS"/>
</dbReference>
<dbReference type="NCBIfam" id="TIGR00062">
    <property type="entry name" value="L27"/>
    <property type="match status" value="1"/>
</dbReference>
<dbReference type="PANTHER" id="PTHR15893:SF0">
    <property type="entry name" value="LARGE RIBOSOMAL SUBUNIT PROTEIN BL27M"/>
    <property type="match status" value="1"/>
</dbReference>
<dbReference type="PANTHER" id="PTHR15893">
    <property type="entry name" value="RIBOSOMAL PROTEIN L27"/>
    <property type="match status" value="1"/>
</dbReference>
<dbReference type="Pfam" id="PF01016">
    <property type="entry name" value="Ribosomal_L27"/>
    <property type="match status" value="1"/>
</dbReference>
<dbReference type="PRINTS" id="PR00063">
    <property type="entry name" value="RIBOSOMALL27"/>
</dbReference>
<dbReference type="SUPFAM" id="SSF110324">
    <property type="entry name" value="Ribosomal L27 protein-like"/>
    <property type="match status" value="1"/>
</dbReference>
<dbReference type="PROSITE" id="PS00831">
    <property type="entry name" value="RIBOSOMAL_L27"/>
    <property type="match status" value="1"/>
</dbReference>
<evidence type="ECO:0000250" key="1">
    <source>
        <dbReference type="UniProtKB" id="Q2FXT0"/>
    </source>
</evidence>
<evidence type="ECO:0000255" key="2">
    <source>
        <dbReference type="HAMAP-Rule" id="MF_00539"/>
    </source>
</evidence>
<evidence type="ECO:0000305" key="3"/>
<gene>
    <name evidence="2" type="primary">rpmA</name>
    <name type="ordered locus">AYWB_627</name>
</gene>
<sequence>MLLQLQIQLFASKKGAGSTRNGRDSHSKRLGAKLSDGQFAKAGAIIYRQRGTKIHPGFNVGRGGDDTLFAKMSGIIKFEKKHGRKKVSVYLQ</sequence>
<accession>Q2NIJ9</accession>
<feature type="propeptide" id="PRO_0000459845" evidence="1">
    <location>
        <begin position="1"/>
        <end position="10"/>
    </location>
</feature>
<feature type="chain" id="PRO_1000017409" description="Large ribosomal subunit protein bL27">
    <location>
        <begin position="11"/>
        <end position="92"/>
    </location>
</feature>
<protein>
    <recommendedName>
        <fullName evidence="2">Large ribosomal subunit protein bL27</fullName>
    </recommendedName>
    <alternativeName>
        <fullName evidence="3">50S ribosomal protein L27</fullName>
    </alternativeName>
</protein>
<comment type="PTM">
    <text evidence="1">The N-terminus is cleaved by ribosomal processing cysteine protease Prp.</text>
</comment>
<comment type="similarity">
    <text evidence="2">Belongs to the bacterial ribosomal protein bL27 family.</text>
</comment>
<keyword id="KW-0687">Ribonucleoprotein</keyword>
<keyword id="KW-0689">Ribosomal protein</keyword>
<reference key="1">
    <citation type="journal article" date="2006" name="J. Bacteriol.">
        <title>Living with genome instability: the adaptation of phytoplasmas to diverse environments of their insect and plant hosts.</title>
        <authorList>
            <person name="Bai X."/>
            <person name="Zhang J."/>
            <person name="Ewing A."/>
            <person name="Miller S.A."/>
            <person name="Jancso Radek A."/>
            <person name="Shevchenko D.V."/>
            <person name="Tsukerman K."/>
            <person name="Walunas T."/>
            <person name="Lapidus A."/>
            <person name="Campbell J.W."/>
            <person name="Hogenhout S.A."/>
        </authorList>
    </citation>
    <scope>NUCLEOTIDE SEQUENCE [LARGE SCALE GENOMIC DNA]</scope>
    <source>
        <strain>AYWB</strain>
    </source>
</reference>
<proteinExistence type="inferred from homology"/>